<accession>P67012</accession>
<accession>Q8YGF7</accession>
<feature type="chain" id="PRO_0000110841" description="Aspartate--tRNA(Asp/Asn) ligase">
    <location>
        <begin position="1"/>
        <end position="595"/>
    </location>
</feature>
<feature type="region of interest" description="Aspartate" evidence="1">
    <location>
        <begin position="199"/>
        <end position="202"/>
    </location>
</feature>
<feature type="binding site" evidence="1">
    <location>
        <position position="175"/>
    </location>
    <ligand>
        <name>L-aspartate</name>
        <dbReference type="ChEBI" id="CHEBI:29991"/>
    </ligand>
</feature>
<feature type="binding site" evidence="1">
    <location>
        <begin position="221"/>
        <end position="223"/>
    </location>
    <ligand>
        <name>ATP</name>
        <dbReference type="ChEBI" id="CHEBI:30616"/>
    </ligand>
</feature>
<feature type="binding site" evidence="1">
    <location>
        <position position="221"/>
    </location>
    <ligand>
        <name>L-aspartate</name>
        <dbReference type="ChEBI" id="CHEBI:29991"/>
    </ligand>
</feature>
<feature type="binding site" evidence="1">
    <location>
        <position position="454"/>
    </location>
    <ligand>
        <name>L-aspartate</name>
        <dbReference type="ChEBI" id="CHEBI:29991"/>
    </ligand>
</feature>
<feature type="binding site" evidence="1">
    <location>
        <position position="488"/>
    </location>
    <ligand>
        <name>ATP</name>
        <dbReference type="ChEBI" id="CHEBI:30616"/>
    </ligand>
</feature>
<feature type="binding site" evidence="1">
    <location>
        <position position="495"/>
    </location>
    <ligand>
        <name>L-aspartate</name>
        <dbReference type="ChEBI" id="CHEBI:29991"/>
    </ligand>
</feature>
<feature type="binding site" evidence="1">
    <location>
        <begin position="540"/>
        <end position="543"/>
    </location>
    <ligand>
        <name>ATP</name>
        <dbReference type="ChEBI" id="CHEBI:30616"/>
    </ligand>
</feature>
<feature type="site" description="Important for tRNA non-discrimination" evidence="1">
    <location>
        <position position="33"/>
    </location>
</feature>
<name>SYDND_BRUME</name>
<evidence type="ECO:0000255" key="1">
    <source>
        <dbReference type="HAMAP-Rule" id="MF_00044"/>
    </source>
</evidence>
<comment type="function">
    <text evidence="1">Aspartyl-tRNA synthetase with relaxed tRNA specificity since it is able to aspartylate not only its cognate tRNA(Asp) but also tRNA(Asn). Reaction proceeds in two steps: L-aspartate is first activated by ATP to form Asp-AMP and then transferred to the acceptor end of tRNA(Asp/Asn).</text>
</comment>
<comment type="catalytic activity">
    <reaction evidence="1">
        <text>tRNA(Asx) + L-aspartate + ATP = L-aspartyl-tRNA(Asx) + AMP + diphosphate</text>
        <dbReference type="Rhea" id="RHEA:18349"/>
        <dbReference type="Rhea" id="RHEA-COMP:9710"/>
        <dbReference type="Rhea" id="RHEA-COMP:9711"/>
        <dbReference type="ChEBI" id="CHEBI:29991"/>
        <dbReference type="ChEBI" id="CHEBI:30616"/>
        <dbReference type="ChEBI" id="CHEBI:33019"/>
        <dbReference type="ChEBI" id="CHEBI:78442"/>
        <dbReference type="ChEBI" id="CHEBI:78516"/>
        <dbReference type="ChEBI" id="CHEBI:456215"/>
        <dbReference type="EC" id="6.1.1.23"/>
    </reaction>
</comment>
<comment type="subunit">
    <text evidence="1">Homodimer.</text>
</comment>
<comment type="subcellular location">
    <subcellularLocation>
        <location evidence="1">Cytoplasm</location>
    </subcellularLocation>
</comment>
<comment type="similarity">
    <text evidence="1">Belongs to the class-II aminoacyl-tRNA synthetase family. Type 1 subfamily.</text>
</comment>
<gene>
    <name evidence="1" type="primary">aspS</name>
    <name type="ordered locus">BMEI1202</name>
</gene>
<sequence>MHRYRSHTCAALRKTDVGSNVRLSGWVHRVRDHGGILFIDLRDHYGITQIVADPDSPAFKVAETVRGEWVIRVDGEVKARADDAVNTNLPTGEVEIFATEIEVLSPAKELPLPVFGEPDYPEDIRLKYRFLDLRRETLHKNIMSRTKIIAAMRRRMTEIGFNEFSTPILTASSPEGARDFLVPSRIHPGKFYALPQAPQQYKQLLMVAGFDRYFQIAPCFRDEDPRADRLPGEFYQLDLEMSFVTQEEVWETMEPVMRGIFEEFAEGKPVTKVFRRIAYDDAIRTYGSDKPDLRNPIEMQAVTDHFAGSGFKVFANMIANDAKVEVWAIPAKTGGSRAFCDRMNSWAQSEGQPGLGYIFWRKEGDKLEGAGPIAKNIGEERTEAIRKQMGLEDGDACFFVAGLPSKFYKFAGDARTRAGEELNLVDRDRFELAWIIDFPFYEWDEDNKKIDFAHNPFSMPQGGMDALENMDPLEIKAYQYDLVCNGFEIASGSIRNQLPEVMVKAFEKVGLSQQDVEERFGGLYRAFQYGAPPHGGMAAGIDRVIMLLVGAKNLREISLFPMNQQALDLLMGAPSEVSPAQLRDLHVRLAPVQKS</sequence>
<reference key="1">
    <citation type="journal article" date="2002" name="Proc. Natl. Acad. Sci. U.S.A.">
        <title>The genome sequence of the facultative intracellular pathogen Brucella melitensis.</title>
        <authorList>
            <person name="DelVecchio V.G."/>
            <person name="Kapatral V."/>
            <person name="Redkar R.J."/>
            <person name="Patra G."/>
            <person name="Mujer C."/>
            <person name="Los T."/>
            <person name="Ivanova N."/>
            <person name="Anderson I."/>
            <person name="Bhattacharyya A."/>
            <person name="Lykidis A."/>
            <person name="Reznik G."/>
            <person name="Jablonski L."/>
            <person name="Larsen N."/>
            <person name="D'Souza M."/>
            <person name="Bernal A."/>
            <person name="Mazur M."/>
            <person name="Goltsman E."/>
            <person name="Selkov E."/>
            <person name="Elzer P.H."/>
            <person name="Hagius S."/>
            <person name="O'Callaghan D."/>
            <person name="Letesson J.-J."/>
            <person name="Haselkorn R."/>
            <person name="Kyrpides N.C."/>
            <person name="Overbeek R."/>
        </authorList>
    </citation>
    <scope>NUCLEOTIDE SEQUENCE [LARGE SCALE GENOMIC DNA]</scope>
    <source>
        <strain>ATCC 23456 / CCUG 17765 / NCTC 10094 / 16M</strain>
    </source>
</reference>
<keyword id="KW-0030">Aminoacyl-tRNA synthetase</keyword>
<keyword id="KW-0067">ATP-binding</keyword>
<keyword id="KW-0963">Cytoplasm</keyword>
<keyword id="KW-0436">Ligase</keyword>
<keyword id="KW-0547">Nucleotide-binding</keyword>
<keyword id="KW-0648">Protein biosynthesis</keyword>
<protein>
    <recommendedName>
        <fullName evidence="1">Aspartate--tRNA(Asp/Asn) ligase</fullName>
        <ecNumber evidence="1">6.1.1.23</ecNumber>
    </recommendedName>
    <alternativeName>
        <fullName evidence="1">Aspartyl-tRNA synthetase</fullName>
        <shortName evidence="1">AspRS</shortName>
    </alternativeName>
    <alternativeName>
        <fullName evidence="1">Non-discriminating aspartyl-tRNA synthetase</fullName>
        <shortName evidence="1">ND-AspRS</shortName>
    </alternativeName>
</protein>
<proteinExistence type="inferred from homology"/>
<organism>
    <name type="scientific">Brucella melitensis biotype 1 (strain ATCC 23456 / CCUG 17765 / NCTC 10094 / 16M)</name>
    <dbReference type="NCBI Taxonomy" id="224914"/>
    <lineage>
        <taxon>Bacteria</taxon>
        <taxon>Pseudomonadati</taxon>
        <taxon>Pseudomonadota</taxon>
        <taxon>Alphaproteobacteria</taxon>
        <taxon>Hyphomicrobiales</taxon>
        <taxon>Brucellaceae</taxon>
        <taxon>Brucella/Ochrobactrum group</taxon>
        <taxon>Brucella</taxon>
    </lineage>
</organism>
<dbReference type="EC" id="6.1.1.23" evidence="1"/>
<dbReference type="EMBL" id="AE008917">
    <property type="protein sequence ID" value="AAL52383.1"/>
    <property type="molecule type" value="Genomic_DNA"/>
</dbReference>
<dbReference type="PIR" id="AD3402">
    <property type="entry name" value="AD3402"/>
</dbReference>
<dbReference type="RefSeq" id="WP_004683546.1">
    <property type="nucleotide sequence ID" value="NZ_GG703778.1"/>
</dbReference>
<dbReference type="SMR" id="P67012"/>
<dbReference type="GeneID" id="97533935"/>
<dbReference type="KEGG" id="bme:BMEI1202"/>
<dbReference type="KEGG" id="bmel:DK63_208"/>
<dbReference type="PATRIC" id="fig|224914.52.peg.215"/>
<dbReference type="eggNOG" id="COG0173">
    <property type="taxonomic scope" value="Bacteria"/>
</dbReference>
<dbReference type="PhylomeDB" id="P67012"/>
<dbReference type="Proteomes" id="UP000000419">
    <property type="component" value="Chromosome I"/>
</dbReference>
<dbReference type="GO" id="GO:0005737">
    <property type="term" value="C:cytoplasm"/>
    <property type="evidence" value="ECO:0007669"/>
    <property type="project" value="UniProtKB-SubCell"/>
</dbReference>
<dbReference type="GO" id="GO:0004815">
    <property type="term" value="F:aspartate-tRNA ligase activity"/>
    <property type="evidence" value="ECO:0007669"/>
    <property type="project" value="UniProtKB-UniRule"/>
</dbReference>
<dbReference type="GO" id="GO:0050560">
    <property type="term" value="F:aspartate-tRNA(Asn) ligase activity"/>
    <property type="evidence" value="ECO:0007669"/>
    <property type="project" value="UniProtKB-EC"/>
</dbReference>
<dbReference type="GO" id="GO:0005524">
    <property type="term" value="F:ATP binding"/>
    <property type="evidence" value="ECO:0007669"/>
    <property type="project" value="UniProtKB-UniRule"/>
</dbReference>
<dbReference type="GO" id="GO:0003676">
    <property type="term" value="F:nucleic acid binding"/>
    <property type="evidence" value="ECO:0007669"/>
    <property type="project" value="InterPro"/>
</dbReference>
<dbReference type="GO" id="GO:0006422">
    <property type="term" value="P:aspartyl-tRNA aminoacylation"/>
    <property type="evidence" value="ECO:0007669"/>
    <property type="project" value="UniProtKB-UniRule"/>
</dbReference>
<dbReference type="CDD" id="cd00777">
    <property type="entry name" value="AspRS_core"/>
    <property type="match status" value="1"/>
</dbReference>
<dbReference type="CDD" id="cd04317">
    <property type="entry name" value="EcAspRS_like_N"/>
    <property type="match status" value="1"/>
</dbReference>
<dbReference type="Gene3D" id="3.30.930.10">
    <property type="entry name" value="Bira Bifunctional Protein, Domain 2"/>
    <property type="match status" value="1"/>
</dbReference>
<dbReference type="Gene3D" id="3.30.1360.30">
    <property type="entry name" value="GAD-like domain"/>
    <property type="match status" value="1"/>
</dbReference>
<dbReference type="Gene3D" id="2.40.50.140">
    <property type="entry name" value="Nucleic acid-binding proteins"/>
    <property type="match status" value="1"/>
</dbReference>
<dbReference type="HAMAP" id="MF_00044">
    <property type="entry name" value="Asp_tRNA_synth_type1"/>
    <property type="match status" value="1"/>
</dbReference>
<dbReference type="InterPro" id="IPR004364">
    <property type="entry name" value="Aa-tRNA-synt_II"/>
</dbReference>
<dbReference type="InterPro" id="IPR006195">
    <property type="entry name" value="aa-tRNA-synth_II"/>
</dbReference>
<dbReference type="InterPro" id="IPR045864">
    <property type="entry name" value="aa-tRNA-synth_II/BPL/LPL"/>
</dbReference>
<dbReference type="InterPro" id="IPR004524">
    <property type="entry name" value="Asp-tRNA-ligase_1"/>
</dbReference>
<dbReference type="InterPro" id="IPR047089">
    <property type="entry name" value="Asp-tRNA-ligase_1_N"/>
</dbReference>
<dbReference type="InterPro" id="IPR002312">
    <property type="entry name" value="Asp/Asn-tRNA-synth_IIb"/>
</dbReference>
<dbReference type="InterPro" id="IPR047090">
    <property type="entry name" value="AspRS_core"/>
</dbReference>
<dbReference type="InterPro" id="IPR004115">
    <property type="entry name" value="GAD-like_sf"/>
</dbReference>
<dbReference type="InterPro" id="IPR029351">
    <property type="entry name" value="GAD_dom"/>
</dbReference>
<dbReference type="InterPro" id="IPR012340">
    <property type="entry name" value="NA-bd_OB-fold"/>
</dbReference>
<dbReference type="InterPro" id="IPR004365">
    <property type="entry name" value="NA-bd_OB_tRNA"/>
</dbReference>
<dbReference type="NCBIfam" id="TIGR00459">
    <property type="entry name" value="aspS_bact"/>
    <property type="match status" value="1"/>
</dbReference>
<dbReference type="NCBIfam" id="NF001750">
    <property type="entry name" value="PRK00476.1"/>
    <property type="match status" value="1"/>
</dbReference>
<dbReference type="PANTHER" id="PTHR22594:SF5">
    <property type="entry name" value="ASPARTATE--TRNA LIGASE, MITOCHONDRIAL"/>
    <property type="match status" value="1"/>
</dbReference>
<dbReference type="PANTHER" id="PTHR22594">
    <property type="entry name" value="ASPARTYL/LYSYL-TRNA SYNTHETASE"/>
    <property type="match status" value="1"/>
</dbReference>
<dbReference type="Pfam" id="PF02938">
    <property type="entry name" value="GAD"/>
    <property type="match status" value="1"/>
</dbReference>
<dbReference type="Pfam" id="PF00152">
    <property type="entry name" value="tRNA-synt_2"/>
    <property type="match status" value="1"/>
</dbReference>
<dbReference type="Pfam" id="PF01336">
    <property type="entry name" value="tRNA_anti-codon"/>
    <property type="match status" value="1"/>
</dbReference>
<dbReference type="PRINTS" id="PR01042">
    <property type="entry name" value="TRNASYNTHASP"/>
</dbReference>
<dbReference type="SUPFAM" id="SSF55681">
    <property type="entry name" value="Class II aaRS and biotin synthetases"/>
    <property type="match status" value="1"/>
</dbReference>
<dbReference type="SUPFAM" id="SSF55261">
    <property type="entry name" value="GAD domain-like"/>
    <property type="match status" value="1"/>
</dbReference>
<dbReference type="SUPFAM" id="SSF50249">
    <property type="entry name" value="Nucleic acid-binding proteins"/>
    <property type="match status" value="1"/>
</dbReference>
<dbReference type="PROSITE" id="PS50862">
    <property type="entry name" value="AA_TRNA_LIGASE_II"/>
    <property type="match status" value="1"/>
</dbReference>